<evidence type="ECO:0000250" key="1"/>
<evidence type="ECO:0000255" key="2">
    <source>
        <dbReference type="HAMAP-Rule" id="MF_00944"/>
    </source>
</evidence>
<evidence type="ECO:0000255" key="3">
    <source>
        <dbReference type="PROSITE-ProRule" id="PRU01228"/>
    </source>
</evidence>
<evidence type="ECO:0000269" key="4">
    <source>
    </source>
</evidence>
<evidence type="ECO:0000269" key="5">
    <source>
    </source>
</evidence>
<evidence type="ECO:0000269" key="6">
    <source>
    </source>
</evidence>
<evidence type="ECO:0007829" key="7">
    <source>
        <dbReference type="PDB" id="1JAL"/>
    </source>
</evidence>
<sequence length="363" mass="39751">MGFKCGIVGLPNVGKSTLFNALTKAGIEAANYPFCTIEPNTGVVPMPDPRLDALAEIVKPERILPTTMEFVDIAGLVAGASKGEGLGNKFLANIRETDAIGHVVRCFENDDIVHVAGKIDPLDDIDTINTELALADLDSCERAIQRLQKRAKGGDKEAKFELSVMEKILPVLENAGMIRSVGLDKEELQAIKSYNFLTLKPTMYIANVNEDGFENNPYLDRVREIAAKEGAVVVPVCAAIESEIAELDDEEKVEFLQDLGIEEPGLNRVIRAGYALLNLQTYFTAGVKEVRAWTVSVGATAPKAAAVIHTDFEKGFIRAEVIAYEDFIQFNGENGAKEAGKWRLEGKDYIVQDGDVMHFRFNV</sequence>
<comment type="function">
    <text evidence="2 6">ATPase that binds to both the 70S ribosome and the 50S ribosomal subunit in a nucleotide-independent manner (By similarity). Does not hydrolyze GTP.</text>
</comment>
<comment type="cofactor">
    <cofactor evidence="1">
        <name>Mg(2+)</name>
        <dbReference type="ChEBI" id="CHEBI:18420"/>
    </cofactor>
</comment>
<comment type="domain">
    <text evidence="5">Composed of 3 distinct structural domains: the N-terminal domain, which has a mononucleotide binding fold typical for the P-loop NTPases, followed by a pronounced alpha-helical coiled coil domain and the C-terminal domain, which may be involved in RNA binding.</text>
</comment>
<comment type="mass spectrometry" mass="40011.0" method="MALDI" evidence="4"/>
<comment type="similarity">
    <text evidence="2">Belongs to the TRAFAC class OBG-HflX-like GTPase superfamily. OBG GTPase family. YchF/OLA1 subfamily.</text>
</comment>
<accession>P44681</accession>
<keyword id="KW-0002">3D-structure</keyword>
<keyword id="KW-0067">ATP-binding</keyword>
<keyword id="KW-0460">Magnesium</keyword>
<keyword id="KW-0479">Metal-binding</keyword>
<keyword id="KW-0547">Nucleotide-binding</keyword>
<keyword id="KW-1185">Reference proteome</keyword>
<name>YCHF_HAEIN</name>
<proteinExistence type="evidence at protein level"/>
<gene>
    <name evidence="2" type="primary">ychF</name>
    <name type="synonym">engD</name>
    <name type="ordered locus">HI_0393</name>
</gene>
<dbReference type="EMBL" id="L42023">
    <property type="protein sequence ID" value="AAC22052.1"/>
    <property type="molecule type" value="Genomic_DNA"/>
</dbReference>
<dbReference type="PIR" id="I64150">
    <property type="entry name" value="I64150"/>
</dbReference>
<dbReference type="RefSeq" id="NP_438555.1">
    <property type="nucleotide sequence ID" value="NC_000907.1"/>
</dbReference>
<dbReference type="PDB" id="1JAL">
    <property type="method" value="X-ray"/>
    <property type="resolution" value="2.40 A"/>
    <property type="chains" value="A/B=1-363"/>
</dbReference>
<dbReference type="PDBsum" id="1JAL"/>
<dbReference type="SMR" id="P44681"/>
<dbReference type="STRING" id="71421.HI_0393"/>
<dbReference type="EnsemblBacteria" id="AAC22052">
    <property type="protein sequence ID" value="AAC22052"/>
    <property type="gene ID" value="HI_0393"/>
</dbReference>
<dbReference type="KEGG" id="hin:HI_0393"/>
<dbReference type="PATRIC" id="fig|71421.8.peg.412"/>
<dbReference type="eggNOG" id="COG0012">
    <property type="taxonomic scope" value="Bacteria"/>
</dbReference>
<dbReference type="HOGENOM" id="CLU_018395_0_1_6"/>
<dbReference type="OrthoDB" id="9810373at2"/>
<dbReference type="PhylomeDB" id="P44681"/>
<dbReference type="BioCyc" id="HINF71421:G1GJ1-408-MONOMER"/>
<dbReference type="EvolutionaryTrace" id="P44681"/>
<dbReference type="Proteomes" id="UP000000579">
    <property type="component" value="Chromosome"/>
</dbReference>
<dbReference type="GO" id="GO:0005737">
    <property type="term" value="C:cytoplasm"/>
    <property type="evidence" value="ECO:0000318"/>
    <property type="project" value="GO_Central"/>
</dbReference>
<dbReference type="GO" id="GO:0005524">
    <property type="term" value="F:ATP binding"/>
    <property type="evidence" value="ECO:0007669"/>
    <property type="project" value="UniProtKB-UniRule"/>
</dbReference>
<dbReference type="GO" id="GO:0016887">
    <property type="term" value="F:ATP hydrolysis activity"/>
    <property type="evidence" value="ECO:0000318"/>
    <property type="project" value="GO_Central"/>
</dbReference>
<dbReference type="GO" id="GO:0005525">
    <property type="term" value="F:GTP binding"/>
    <property type="evidence" value="ECO:0007669"/>
    <property type="project" value="InterPro"/>
</dbReference>
<dbReference type="GO" id="GO:0046872">
    <property type="term" value="F:metal ion binding"/>
    <property type="evidence" value="ECO:0007669"/>
    <property type="project" value="UniProtKB-KW"/>
</dbReference>
<dbReference type="GO" id="GO:0043023">
    <property type="term" value="F:ribosomal large subunit binding"/>
    <property type="evidence" value="ECO:0007669"/>
    <property type="project" value="UniProtKB-UniRule"/>
</dbReference>
<dbReference type="CDD" id="cd04867">
    <property type="entry name" value="TGS_YchF_OLA1"/>
    <property type="match status" value="1"/>
</dbReference>
<dbReference type="CDD" id="cd01900">
    <property type="entry name" value="YchF"/>
    <property type="match status" value="1"/>
</dbReference>
<dbReference type="FunFam" id="1.10.150.300:FF:000002">
    <property type="entry name" value="Ribosome-binding ATPase YchF"/>
    <property type="match status" value="1"/>
</dbReference>
<dbReference type="FunFam" id="3.10.20.30:FF:000001">
    <property type="entry name" value="Ribosome-binding ATPase YchF"/>
    <property type="match status" value="1"/>
</dbReference>
<dbReference type="Gene3D" id="3.10.20.30">
    <property type="match status" value="1"/>
</dbReference>
<dbReference type="Gene3D" id="3.40.50.300">
    <property type="entry name" value="P-loop containing nucleotide triphosphate hydrolases"/>
    <property type="match status" value="1"/>
</dbReference>
<dbReference type="Gene3D" id="1.10.150.300">
    <property type="entry name" value="TGS-like domain"/>
    <property type="match status" value="1"/>
</dbReference>
<dbReference type="HAMAP" id="MF_00944">
    <property type="entry name" value="YchF_OLA1_ATPase"/>
    <property type="match status" value="1"/>
</dbReference>
<dbReference type="InterPro" id="IPR004396">
    <property type="entry name" value="ATPase_YchF/OLA1"/>
</dbReference>
<dbReference type="InterPro" id="IPR012675">
    <property type="entry name" value="Beta-grasp_dom_sf"/>
</dbReference>
<dbReference type="InterPro" id="IPR031167">
    <property type="entry name" value="G_OBG"/>
</dbReference>
<dbReference type="InterPro" id="IPR006073">
    <property type="entry name" value="GTP-bd"/>
</dbReference>
<dbReference type="InterPro" id="IPR027417">
    <property type="entry name" value="P-loop_NTPase"/>
</dbReference>
<dbReference type="InterPro" id="IPR004095">
    <property type="entry name" value="TGS"/>
</dbReference>
<dbReference type="InterPro" id="IPR012676">
    <property type="entry name" value="TGS-like"/>
</dbReference>
<dbReference type="InterPro" id="IPR023192">
    <property type="entry name" value="TGS-like_dom_sf"/>
</dbReference>
<dbReference type="InterPro" id="IPR013029">
    <property type="entry name" value="YchF_C"/>
</dbReference>
<dbReference type="InterPro" id="IPR041706">
    <property type="entry name" value="YchF_N"/>
</dbReference>
<dbReference type="NCBIfam" id="TIGR00092">
    <property type="entry name" value="redox-regulated ATPase YchF"/>
    <property type="match status" value="1"/>
</dbReference>
<dbReference type="PANTHER" id="PTHR23305">
    <property type="entry name" value="OBG GTPASE FAMILY"/>
    <property type="match status" value="1"/>
</dbReference>
<dbReference type="PANTHER" id="PTHR23305:SF18">
    <property type="entry name" value="OBG-TYPE G DOMAIN-CONTAINING PROTEIN"/>
    <property type="match status" value="1"/>
</dbReference>
<dbReference type="Pfam" id="PF01926">
    <property type="entry name" value="MMR_HSR1"/>
    <property type="match status" value="1"/>
</dbReference>
<dbReference type="Pfam" id="PF06071">
    <property type="entry name" value="YchF-GTPase_C"/>
    <property type="match status" value="1"/>
</dbReference>
<dbReference type="PIRSF" id="PIRSF006641">
    <property type="entry name" value="CHP00092"/>
    <property type="match status" value="1"/>
</dbReference>
<dbReference type="PRINTS" id="PR00326">
    <property type="entry name" value="GTP1OBG"/>
</dbReference>
<dbReference type="SUPFAM" id="SSF52540">
    <property type="entry name" value="P-loop containing nucleoside triphosphate hydrolases"/>
    <property type="match status" value="1"/>
</dbReference>
<dbReference type="SUPFAM" id="SSF81271">
    <property type="entry name" value="TGS-like"/>
    <property type="match status" value="1"/>
</dbReference>
<dbReference type="PROSITE" id="PS51710">
    <property type="entry name" value="G_OBG"/>
    <property type="match status" value="1"/>
</dbReference>
<dbReference type="PROSITE" id="PS51880">
    <property type="entry name" value="TGS"/>
    <property type="match status" value="1"/>
</dbReference>
<feature type="initiator methionine" description="Removed" evidence="1">
    <location>
        <position position="1"/>
    </location>
</feature>
<feature type="chain" id="PRO_0000201678" description="Ribosome-binding ATPase YchF">
    <location>
        <begin position="2"/>
        <end position="363"/>
    </location>
</feature>
<feature type="domain" description="OBG-type G">
    <location>
        <begin position="3"/>
        <end position="256"/>
    </location>
</feature>
<feature type="domain" description="TGS" evidence="3">
    <location>
        <begin position="278"/>
        <end position="361"/>
    </location>
</feature>
<feature type="binding site" evidence="2">
    <location>
        <begin position="12"/>
        <end position="17"/>
    </location>
    <ligand>
        <name>ATP</name>
        <dbReference type="ChEBI" id="CHEBI:30616"/>
    </ligand>
</feature>
<feature type="binding site" evidence="1">
    <location>
        <position position="16"/>
    </location>
    <ligand>
        <name>Mg(2+)</name>
        <dbReference type="ChEBI" id="CHEBI:18420"/>
    </ligand>
</feature>
<feature type="binding site" evidence="1">
    <location>
        <position position="36"/>
    </location>
    <ligand>
        <name>Mg(2+)</name>
        <dbReference type="ChEBI" id="CHEBI:18420"/>
    </ligand>
</feature>
<feature type="strand" evidence="7">
    <location>
        <begin position="4"/>
        <end position="8"/>
    </location>
</feature>
<feature type="helix" evidence="7">
    <location>
        <begin position="15"/>
        <end position="24"/>
    </location>
</feature>
<feature type="strand" evidence="7">
    <location>
        <begin position="41"/>
        <end position="45"/>
    </location>
</feature>
<feature type="helix" evidence="7">
    <location>
        <begin position="49"/>
        <end position="58"/>
    </location>
</feature>
<feature type="strand" evidence="7">
    <location>
        <begin position="61"/>
        <end position="64"/>
    </location>
</feature>
<feature type="strand" evidence="7">
    <location>
        <begin position="67"/>
        <end position="72"/>
    </location>
</feature>
<feature type="helix" evidence="7">
    <location>
        <begin position="80"/>
        <end position="83"/>
    </location>
</feature>
<feature type="helix" evidence="7">
    <location>
        <begin position="84"/>
        <end position="86"/>
    </location>
</feature>
<feature type="helix" evidence="7">
    <location>
        <begin position="90"/>
        <end position="95"/>
    </location>
</feature>
<feature type="strand" evidence="7">
    <location>
        <begin position="98"/>
        <end position="105"/>
    </location>
</feature>
<feature type="helix" evidence="7">
    <location>
        <begin position="121"/>
        <end position="151"/>
    </location>
</feature>
<feature type="turn" evidence="7">
    <location>
        <begin position="152"/>
        <end position="154"/>
    </location>
</feature>
<feature type="helix" evidence="7">
    <location>
        <begin position="156"/>
        <end position="173"/>
    </location>
</feature>
<feature type="helix" evidence="7">
    <location>
        <begin position="178"/>
        <end position="180"/>
    </location>
</feature>
<feature type="helix" evidence="7">
    <location>
        <begin position="185"/>
        <end position="191"/>
    </location>
</feature>
<feature type="helix" evidence="7">
    <location>
        <begin position="192"/>
        <end position="194"/>
    </location>
</feature>
<feature type="strand" evidence="7">
    <location>
        <begin position="202"/>
        <end position="207"/>
    </location>
</feature>
<feature type="strand" evidence="7">
    <location>
        <begin position="213"/>
        <end position="215"/>
    </location>
</feature>
<feature type="helix" evidence="7">
    <location>
        <begin position="217"/>
        <end position="228"/>
    </location>
</feature>
<feature type="strand" evidence="7">
    <location>
        <begin position="232"/>
        <end position="236"/>
    </location>
</feature>
<feature type="helix" evidence="7">
    <location>
        <begin position="238"/>
        <end position="243"/>
    </location>
</feature>
<feature type="helix" evidence="7">
    <location>
        <begin position="244"/>
        <end position="246"/>
    </location>
</feature>
<feature type="helix" evidence="7">
    <location>
        <begin position="253"/>
        <end position="256"/>
    </location>
</feature>
<feature type="helix" evidence="7">
    <location>
        <begin position="267"/>
        <end position="276"/>
    </location>
</feature>
<feature type="strand" evidence="7">
    <location>
        <begin position="279"/>
        <end position="285"/>
    </location>
</feature>
<feature type="strand" evidence="7">
    <location>
        <begin position="287"/>
        <end position="296"/>
    </location>
</feature>
<feature type="helix" evidence="7">
    <location>
        <begin position="301"/>
        <end position="306"/>
    </location>
</feature>
<feature type="helix" evidence="7">
    <location>
        <begin position="312"/>
        <end position="315"/>
    </location>
</feature>
<feature type="strand" evidence="7">
    <location>
        <begin position="318"/>
        <end position="322"/>
    </location>
</feature>
<feature type="helix" evidence="7">
    <location>
        <begin position="324"/>
        <end position="329"/>
    </location>
</feature>
<feature type="helix" evidence="7">
    <location>
        <begin position="333"/>
        <end position="338"/>
    </location>
</feature>
<feature type="strand" evidence="7">
    <location>
        <begin position="343"/>
        <end position="345"/>
    </location>
</feature>
<feature type="strand" evidence="7">
    <location>
        <begin position="356"/>
        <end position="361"/>
    </location>
</feature>
<protein>
    <recommendedName>
        <fullName evidence="2">Ribosome-binding ATPase YchF</fullName>
    </recommendedName>
</protein>
<organism>
    <name type="scientific">Haemophilus influenzae (strain ATCC 51907 / DSM 11121 / KW20 / Rd)</name>
    <dbReference type="NCBI Taxonomy" id="71421"/>
    <lineage>
        <taxon>Bacteria</taxon>
        <taxon>Pseudomonadati</taxon>
        <taxon>Pseudomonadota</taxon>
        <taxon>Gammaproteobacteria</taxon>
        <taxon>Pasteurellales</taxon>
        <taxon>Pasteurellaceae</taxon>
        <taxon>Haemophilus</taxon>
    </lineage>
</organism>
<reference key="1">
    <citation type="journal article" date="1995" name="Science">
        <title>Whole-genome random sequencing and assembly of Haemophilus influenzae Rd.</title>
        <authorList>
            <person name="Fleischmann R.D."/>
            <person name="Adams M.D."/>
            <person name="White O."/>
            <person name="Clayton R.A."/>
            <person name="Kirkness E.F."/>
            <person name="Kerlavage A.R."/>
            <person name="Bult C.J."/>
            <person name="Tomb J.-F."/>
            <person name="Dougherty B.A."/>
            <person name="Merrick J.M."/>
            <person name="McKenney K."/>
            <person name="Sutton G.G."/>
            <person name="FitzHugh W."/>
            <person name="Fields C.A."/>
            <person name="Gocayne J.D."/>
            <person name="Scott J.D."/>
            <person name="Shirley R."/>
            <person name="Liu L.-I."/>
            <person name="Glodek A."/>
            <person name="Kelley J.M."/>
            <person name="Weidman J.F."/>
            <person name="Phillips C.A."/>
            <person name="Spriggs T."/>
            <person name="Hedblom E."/>
            <person name="Cotton M.D."/>
            <person name="Utterback T.R."/>
            <person name="Hanna M.C."/>
            <person name="Nguyen D.T."/>
            <person name="Saudek D.M."/>
            <person name="Brandon R.C."/>
            <person name="Fine L.D."/>
            <person name="Fritchman J.L."/>
            <person name="Fuhrmann J.L."/>
            <person name="Geoghagen N.S.M."/>
            <person name="Gnehm C.L."/>
            <person name="McDonald L.A."/>
            <person name="Small K.V."/>
            <person name="Fraser C.M."/>
            <person name="Smith H.O."/>
            <person name="Venter J.C."/>
        </authorList>
    </citation>
    <scope>NUCLEOTIDE SEQUENCE [LARGE SCALE GENOMIC DNA]</scope>
    <source>
        <strain>ATCC 51907 / DSM 11121 / KW20 / Rd</strain>
    </source>
</reference>
<reference key="2">
    <citation type="journal article" date="2000" name="Electrophoresis">
        <title>Two-dimensional map of the proteome of Haemophilus influenzae.</title>
        <authorList>
            <person name="Langen H."/>
            <person name="Takacs B."/>
            <person name="Evers S."/>
            <person name="Berndt P."/>
            <person name="Lahm H.W."/>
            <person name="Wipf B."/>
            <person name="Gray C."/>
            <person name="Fountoulakis M."/>
        </authorList>
    </citation>
    <scope>IDENTIFICATION BY MASS SPECTROMETRY</scope>
    <source>
        <strain>ATCC 51907 / DSM 11121 / KW20 / Rd</strain>
    </source>
</reference>
<reference key="3">
    <citation type="journal article" date="2003" name="J. Bacteriol.">
        <title>Crystal structure of the YchF protein reveals binding sites for GTP and nucleic acid.</title>
        <authorList>
            <person name="Teplyakov A."/>
            <person name="Obmolova G."/>
            <person name="Chu S.Y."/>
            <person name="Toedt J."/>
            <person name="Eisenstein E."/>
            <person name="Howard A.J."/>
            <person name="Gilliland G.L."/>
        </authorList>
    </citation>
    <scope>X-RAY CRYSTALLOGRAPHY (2.4 ANGSTROMS)</scope>
    <scope>DOMAIN</scope>
</reference>
<reference key="4">
    <citation type="journal article" date="2007" name="J. Biol. Chem.">
        <title>Human OLA1 defines an ATPase subfamily in the Obg family of GTP-binding proteins.</title>
        <authorList>
            <person name="Koller-Eichhorn R."/>
            <person name="Marquardt T."/>
            <person name="Gail R."/>
            <person name="Wittinghofer A."/>
            <person name="Kostrewa D."/>
            <person name="Kutay U."/>
            <person name="Kambach C."/>
        </authorList>
    </citation>
    <scope>FUNCTION</scope>
    <scope>ATPASE ACTIVITY</scope>
</reference>